<name>DEJP_DROME</name>
<feature type="signal peptide" evidence="1">
    <location>
        <begin position="1"/>
        <end position="21"/>
    </location>
</feature>
<feature type="peptide" id="PRO_0000021103" description="Ductus ejaculatorius peptide 99B">
    <location>
        <begin position="22"/>
        <end position="52"/>
    </location>
</feature>
<feature type="propeptide" id="PRO_0000021104">
    <location>
        <begin position="53"/>
        <end position="54"/>
    </location>
</feature>
<feature type="modified residue" description="Pyrrolidone carboxylic acid" evidence="1">
    <location>
        <position position="22"/>
    </location>
</feature>
<feature type="glycosylation site" description="N-linked (GlcNAc...) asparagine" evidence="1">
    <location>
        <position position="25"/>
    </location>
</feature>
<feature type="disulfide bond" evidence="1">
    <location>
        <begin position="40"/>
        <end position="52"/>
    </location>
</feature>
<dbReference type="EMBL" id="AE014297">
    <property type="protein sequence ID" value="AAS65225.1"/>
    <property type="molecule type" value="Genomic_DNA"/>
</dbReference>
<dbReference type="EMBL" id="BT032714">
    <property type="protein sequence ID" value="ACD81728.1"/>
    <property type="status" value="ALT_INIT"/>
    <property type="molecule type" value="mRNA"/>
</dbReference>
<dbReference type="EMBL" id="BT032724">
    <property type="protein sequence ID" value="ACD81738.1"/>
    <property type="status" value="ALT_INIT"/>
    <property type="molecule type" value="mRNA"/>
</dbReference>
<dbReference type="EMBL" id="BT032738">
    <property type="protein sequence ID" value="ACD81752.1"/>
    <property type="status" value="ALT_INIT"/>
    <property type="molecule type" value="mRNA"/>
</dbReference>
<dbReference type="EMBL" id="BT032746">
    <property type="protein sequence ID" value="ACD81760.1"/>
    <property type="status" value="ALT_INIT"/>
    <property type="molecule type" value="mRNA"/>
</dbReference>
<dbReference type="RefSeq" id="NP_996305.1">
    <property type="nucleotide sequence ID" value="NM_206582.2"/>
</dbReference>
<dbReference type="FunCoup" id="P81160">
    <property type="interactions" value="1"/>
</dbReference>
<dbReference type="IntAct" id="P81160">
    <property type="interactions" value="18"/>
</dbReference>
<dbReference type="STRING" id="7227.FBpp0088975"/>
<dbReference type="GlyCosmos" id="P81160">
    <property type="glycosylation" value="1 site, No reported glycans"/>
</dbReference>
<dbReference type="GlyGen" id="P81160">
    <property type="glycosylation" value="1 site"/>
</dbReference>
<dbReference type="iPTMnet" id="P81160"/>
<dbReference type="PaxDb" id="7227-FBpp0088975"/>
<dbReference type="DNASU" id="2768691"/>
<dbReference type="EnsemblMetazoa" id="FBtr0089608">
    <property type="protein sequence ID" value="FBpp0088975"/>
    <property type="gene ID" value="FBgn0250832"/>
</dbReference>
<dbReference type="GeneID" id="2768691"/>
<dbReference type="KEGG" id="dme:Dmel_CG33495"/>
<dbReference type="AGR" id="FB:FBgn0250832"/>
<dbReference type="CTD" id="2768691"/>
<dbReference type="FlyBase" id="FBgn0250832">
    <property type="gene designation" value="Dup99B"/>
</dbReference>
<dbReference type="VEuPathDB" id="VectorBase:FBgn0250832"/>
<dbReference type="GeneTree" id="ENSGT00940000176695"/>
<dbReference type="HOGENOM" id="CLU_213488_0_0_1"/>
<dbReference type="InParanoid" id="P81160"/>
<dbReference type="OMA" id="MEREKWC"/>
<dbReference type="OrthoDB" id="10377284at2759"/>
<dbReference type="PhylomeDB" id="P81160"/>
<dbReference type="BioGRID-ORCS" id="2768691">
    <property type="hits" value="0 hits in 1 CRISPR screen"/>
</dbReference>
<dbReference type="GenomeRNAi" id="2768691"/>
<dbReference type="PRO" id="PR:P81160"/>
<dbReference type="Proteomes" id="UP000000803">
    <property type="component" value="Chromosome 3R"/>
</dbReference>
<dbReference type="Bgee" id="FBgn0250832">
    <property type="expression patterns" value="Expressed in spermatid in male reproductive gland and 50 other cell types or tissues"/>
</dbReference>
<dbReference type="ExpressionAtlas" id="P81160">
    <property type="expression patterns" value="baseline and differential"/>
</dbReference>
<dbReference type="GO" id="GO:0005615">
    <property type="term" value="C:extracellular space"/>
    <property type="evidence" value="ECO:0007005"/>
    <property type="project" value="FlyBase"/>
</dbReference>
<dbReference type="GO" id="GO:0001664">
    <property type="term" value="F:G protein-coupled receptor binding"/>
    <property type="evidence" value="ECO:0000353"/>
    <property type="project" value="FlyBase"/>
</dbReference>
<dbReference type="GO" id="GO:0005179">
    <property type="term" value="F:hormone activity"/>
    <property type="evidence" value="ECO:0007669"/>
    <property type="project" value="InterPro"/>
</dbReference>
<dbReference type="GO" id="GO:0018991">
    <property type="term" value="P:egg-laying behavior"/>
    <property type="evidence" value="ECO:0000315"/>
    <property type="project" value="FlyBase"/>
</dbReference>
<dbReference type="GO" id="GO:0007186">
    <property type="term" value="P:G protein-coupled receptor signaling pathway"/>
    <property type="evidence" value="ECO:0000314"/>
    <property type="project" value="FlyBase"/>
</dbReference>
<dbReference type="GO" id="GO:0007621">
    <property type="term" value="P:negative regulation of female receptivity"/>
    <property type="evidence" value="ECO:0000304"/>
    <property type="project" value="FlyBase"/>
</dbReference>
<dbReference type="GO" id="GO:0045434">
    <property type="term" value="P:negative regulation of female receptivity, post-mating"/>
    <property type="evidence" value="ECO:0000315"/>
    <property type="project" value="FlyBase"/>
</dbReference>
<dbReference type="GO" id="GO:0046662">
    <property type="term" value="P:regulation of egg-laying behavior"/>
    <property type="evidence" value="ECO:0000304"/>
    <property type="project" value="FlyBase"/>
</dbReference>
<dbReference type="GO" id="GO:0019953">
    <property type="term" value="P:sexual reproduction"/>
    <property type="evidence" value="ECO:0007007"/>
    <property type="project" value="FlyBase"/>
</dbReference>
<dbReference type="InterPro" id="IPR012608">
    <property type="entry name" value="Sex_peptide"/>
</dbReference>
<dbReference type="Pfam" id="PF08138">
    <property type="entry name" value="Sex_peptide"/>
    <property type="match status" value="1"/>
</dbReference>
<protein>
    <recommendedName>
        <fullName>Ductus ejaculatorius peptide 99B</fullName>
    </recommendedName>
</protein>
<gene>
    <name type="primary">Dup99B</name>
    <name type="ORF">CG33495</name>
</gene>
<proteinExistence type="evidence at protein level"/>
<sequence length="54" mass="6245">MKTPLFLLLVVLASLLGLALSQDRNDTEWIQSQKDREKWCRLNLGPYLGGRCRK</sequence>
<accession>P81160</accession>
<accession>B3DMS6</accession>
<organism>
    <name type="scientific">Drosophila melanogaster</name>
    <name type="common">Fruit fly</name>
    <dbReference type="NCBI Taxonomy" id="7227"/>
    <lineage>
        <taxon>Eukaryota</taxon>
        <taxon>Metazoa</taxon>
        <taxon>Ecdysozoa</taxon>
        <taxon>Arthropoda</taxon>
        <taxon>Hexapoda</taxon>
        <taxon>Insecta</taxon>
        <taxon>Pterygota</taxon>
        <taxon>Neoptera</taxon>
        <taxon>Endopterygota</taxon>
        <taxon>Diptera</taxon>
        <taxon>Brachycera</taxon>
        <taxon>Muscomorpha</taxon>
        <taxon>Ephydroidea</taxon>
        <taxon>Drosophilidae</taxon>
        <taxon>Drosophila</taxon>
        <taxon>Sophophora</taxon>
    </lineage>
</organism>
<reference key="1">
    <citation type="journal article" date="2000" name="Science">
        <title>The genome sequence of Drosophila melanogaster.</title>
        <authorList>
            <person name="Adams M.D."/>
            <person name="Celniker S.E."/>
            <person name="Holt R.A."/>
            <person name="Evans C.A."/>
            <person name="Gocayne J.D."/>
            <person name="Amanatides P.G."/>
            <person name="Scherer S.E."/>
            <person name="Li P.W."/>
            <person name="Hoskins R.A."/>
            <person name="Galle R.F."/>
            <person name="George R.A."/>
            <person name="Lewis S.E."/>
            <person name="Richards S."/>
            <person name="Ashburner M."/>
            <person name="Henderson S.N."/>
            <person name="Sutton G.G."/>
            <person name="Wortman J.R."/>
            <person name="Yandell M.D."/>
            <person name="Zhang Q."/>
            <person name="Chen L.X."/>
            <person name="Brandon R.C."/>
            <person name="Rogers Y.-H.C."/>
            <person name="Blazej R.G."/>
            <person name="Champe M."/>
            <person name="Pfeiffer B.D."/>
            <person name="Wan K.H."/>
            <person name="Doyle C."/>
            <person name="Baxter E.G."/>
            <person name="Helt G."/>
            <person name="Nelson C.R."/>
            <person name="Miklos G.L.G."/>
            <person name="Abril J.F."/>
            <person name="Agbayani A."/>
            <person name="An H.-J."/>
            <person name="Andrews-Pfannkoch C."/>
            <person name="Baldwin D."/>
            <person name="Ballew R.M."/>
            <person name="Basu A."/>
            <person name="Baxendale J."/>
            <person name="Bayraktaroglu L."/>
            <person name="Beasley E.M."/>
            <person name="Beeson K.Y."/>
            <person name="Benos P.V."/>
            <person name="Berman B.P."/>
            <person name="Bhandari D."/>
            <person name="Bolshakov S."/>
            <person name="Borkova D."/>
            <person name="Botchan M.R."/>
            <person name="Bouck J."/>
            <person name="Brokstein P."/>
            <person name="Brottier P."/>
            <person name="Burtis K.C."/>
            <person name="Busam D.A."/>
            <person name="Butler H."/>
            <person name="Cadieu E."/>
            <person name="Center A."/>
            <person name="Chandra I."/>
            <person name="Cherry J.M."/>
            <person name="Cawley S."/>
            <person name="Dahlke C."/>
            <person name="Davenport L.B."/>
            <person name="Davies P."/>
            <person name="de Pablos B."/>
            <person name="Delcher A."/>
            <person name="Deng Z."/>
            <person name="Mays A.D."/>
            <person name="Dew I."/>
            <person name="Dietz S.M."/>
            <person name="Dodson K."/>
            <person name="Doup L.E."/>
            <person name="Downes M."/>
            <person name="Dugan-Rocha S."/>
            <person name="Dunkov B.C."/>
            <person name="Dunn P."/>
            <person name="Durbin K.J."/>
            <person name="Evangelista C.C."/>
            <person name="Ferraz C."/>
            <person name="Ferriera S."/>
            <person name="Fleischmann W."/>
            <person name="Fosler C."/>
            <person name="Gabrielian A.E."/>
            <person name="Garg N.S."/>
            <person name="Gelbart W.M."/>
            <person name="Glasser K."/>
            <person name="Glodek A."/>
            <person name="Gong F."/>
            <person name="Gorrell J.H."/>
            <person name="Gu Z."/>
            <person name="Guan P."/>
            <person name="Harris M."/>
            <person name="Harris N.L."/>
            <person name="Harvey D.A."/>
            <person name="Heiman T.J."/>
            <person name="Hernandez J.R."/>
            <person name="Houck J."/>
            <person name="Hostin D."/>
            <person name="Houston K.A."/>
            <person name="Howland T.J."/>
            <person name="Wei M.-H."/>
            <person name="Ibegwam C."/>
            <person name="Jalali M."/>
            <person name="Kalush F."/>
            <person name="Karpen G.H."/>
            <person name="Ke Z."/>
            <person name="Kennison J.A."/>
            <person name="Ketchum K.A."/>
            <person name="Kimmel B.E."/>
            <person name="Kodira C.D."/>
            <person name="Kraft C.L."/>
            <person name="Kravitz S."/>
            <person name="Kulp D."/>
            <person name="Lai Z."/>
            <person name="Lasko P."/>
            <person name="Lei Y."/>
            <person name="Levitsky A.A."/>
            <person name="Li J.H."/>
            <person name="Li Z."/>
            <person name="Liang Y."/>
            <person name="Lin X."/>
            <person name="Liu X."/>
            <person name="Mattei B."/>
            <person name="McIntosh T.C."/>
            <person name="McLeod M.P."/>
            <person name="McPherson D."/>
            <person name="Merkulov G."/>
            <person name="Milshina N.V."/>
            <person name="Mobarry C."/>
            <person name="Morris J."/>
            <person name="Moshrefi A."/>
            <person name="Mount S.M."/>
            <person name="Moy M."/>
            <person name="Murphy B."/>
            <person name="Murphy L."/>
            <person name="Muzny D.M."/>
            <person name="Nelson D.L."/>
            <person name="Nelson D.R."/>
            <person name="Nelson K.A."/>
            <person name="Nixon K."/>
            <person name="Nusskern D.R."/>
            <person name="Pacleb J.M."/>
            <person name="Palazzolo M."/>
            <person name="Pittman G.S."/>
            <person name="Pan S."/>
            <person name="Pollard J."/>
            <person name="Puri V."/>
            <person name="Reese M.G."/>
            <person name="Reinert K."/>
            <person name="Remington K."/>
            <person name="Saunders R.D.C."/>
            <person name="Scheeler F."/>
            <person name="Shen H."/>
            <person name="Shue B.C."/>
            <person name="Siden-Kiamos I."/>
            <person name="Simpson M."/>
            <person name="Skupski M.P."/>
            <person name="Smith T.J."/>
            <person name="Spier E."/>
            <person name="Spradling A.C."/>
            <person name="Stapleton M."/>
            <person name="Strong R."/>
            <person name="Sun E."/>
            <person name="Svirskas R."/>
            <person name="Tector C."/>
            <person name="Turner R."/>
            <person name="Venter E."/>
            <person name="Wang A.H."/>
            <person name="Wang X."/>
            <person name="Wang Z.-Y."/>
            <person name="Wassarman D.A."/>
            <person name="Weinstock G.M."/>
            <person name="Weissenbach J."/>
            <person name="Williams S.M."/>
            <person name="Woodage T."/>
            <person name="Worley K.C."/>
            <person name="Wu D."/>
            <person name="Yang S."/>
            <person name="Yao Q.A."/>
            <person name="Ye J."/>
            <person name="Yeh R.-F."/>
            <person name="Zaveri J.S."/>
            <person name="Zhan M."/>
            <person name="Zhang G."/>
            <person name="Zhao Q."/>
            <person name="Zheng L."/>
            <person name="Zheng X.H."/>
            <person name="Zhong F.N."/>
            <person name="Zhong W."/>
            <person name="Zhou X."/>
            <person name="Zhu S.C."/>
            <person name="Zhu X."/>
            <person name="Smith H.O."/>
            <person name="Gibbs R.A."/>
            <person name="Myers E.W."/>
            <person name="Rubin G.M."/>
            <person name="Venter J.C."/>
        </authorList>
    </citation>
    <scope>NUCLEOTIDE SEQUENCE [LARGE SCALE GENOMIC DNA]</scope>
    <source>
        <strain>Berkeley</strain>
    </source>
</reference>
<reference key="2">
    <citation type="journal article" date="2002" name="Genome Biol.">
        <title>Annotation of the Drosophila melanogaster euchromatic genome: a systematic review.</title>
        <authorList>
            <person name="Misra S."/>
            <person name="Crosby M.A."/>
            <person name="Mungall C.J."/>
            <person name="Matthews B.B."/>
            <person name="Campbell K.S."/>
            <person name="Hradecky P."/>
            <person name="Huang Y."/>
            <person name="Kaminker J.S."/>
            <person name="Millburn G.H."/>
            <person name="Prochnik S.E."/>
            <person name="Smith C.D."/>
            <person name="Tupy J.L."/>
            <person name="Whitfield E.J."/>
            <person name="Bayraktaroglu L."/>
            <person name="Berman B.P."/>
            <person name="Bettencourt B.R."/>
            <person name="Celniker S.E."/>
            <person name="de Grey A.D.N.J."/>
            <person name="Drysdale R.A."/>
            <person name="Harris N.L."/>
            <person name="Richter J."/>
            <person name="Russo S."/>
            <person name="Schroeder A.J."/>
            <person name="Shu S.Q."/>
            <person name="Stapleton M."/>
            <person name="Yamada C."/>
            <person name="Ashburner M."/>
            <person name="Gelbart W.M."/>
            <person name="Rubin G.M."/>
            <person name="Lewis S.E."/>
        </authorList>
    </citation>
    <scope>GENOME REANNOTATION</scope>
    <source>
        <strain>Berkeley</strain>
    </source>
</reference>
<reference key="3">
    <citation type="submission" date="2008-05" db="EMBL/GenBank/DDBJ databases">
        <authorList>
            <person name="Carlson J.W."/>
            <person name="Booth B."/>
            <person name="Frise E."/>
            <person name="Park S."/>
            <person name="Wan K.H."/>
            <person name="Yu C."/>
            <person name="Celniker S.E."/>
        </authorList>
    </citation>
    <scope>NUCLEOTIDE SEQUENCE [LARGE SCALE MRNA] OF 1-37</scope>
    <source>
        <strain>Berkeley</strain>
    </source>
</reference>
<reference key="4">
    <citation type="journal article" date="2002" name="Eur. J. Biochem.">
        <title>Ductus ejaculatorius peptide 99B (DUP99B), a novel Drosophila melanogaster sex-peptide pheromone.</title>
        <authorList>
            <person name="Saudan P."/>
            <person name="Hauck K."/>
            <person name="Soller M."/>
            <person name="Choffat Y."/>
            <person name="Ottiger M."/>
            <person name="Sporri M."/>
            <person name="Ding Z."/>
            <person name="Hess D."/>
            <person name="Gehrig P.M."/>
            <person name="Klauser S."/>
            <person name="Hunziker P."/>
            <person name="Kubli E."/>
        </authorList>
    </citation>
    <scope>NUCLEOTIDE SEQUENCE [GENOMIC DNA] OF 22-45</scope>
    <scope>PROTEIN SEQUENCE OF 30-52</scope>
    <scope>PYROGLUTAMATE FORMATION AT GLN-22</scope>
    <scope>GLYCOSYLATION</scope>
    <scope>DISULFIDE BONDS</scope>
    <scope>FUNCTION</scope>
    <scope>SUBCELLULAR LOCATION</scope>
    <scope>TISSUE SPECIFICITY</scope>
    <source>
        <strain>Oregon-R</strain>
        <tissue>Ductus ejaculatorius</tissue>
    </source>
</reference>
<keyword id="KW-0085">Behavior</keyword>
<keyword id="KW-0903">Direct protein sequencing</keyword>
<keyword id="KW-1015">Disulfide bond</keyword>
<keyword id="KW-0325">Glycoprotein</keyword>
<keyword id="KW-0873">Pyrrolidone carboxylic acid</keyword>
<keyword id="KW-1185">Reference proteome</keyword>
<keyword id="KW-0964">Secreted</keyword>
<keyword id="KW-0732">Signal</keyword>
<evidence type="ECO:0000269" key="1">
    <source>
    </source>
</evidence>
<evidence type="ECO:0000305" key="2"/>
<comment type="function">
    <text evidence="1">Induces post-mating responses; increased oviposition and reduced receptivity.</text>
</comment>
<comment type="subcellular location">
    <subcellularLocation>
        <location evidence="1">Secreted</location>
    </subcellularLocation>
</comment>
<comment type="tissue specificity">
    <text evidence="1">Ductus ejaculatorius.</text>
</comment>
<comment type="similarity">
    <text evidence="2">To paragonial peptide B.</text>
</comment>
<comment type="sequence caution" evidence="2">
    <conflict type="erroneous initiation">
        <sequence resource="EMBL-CDS" id="ACD81728"/>
    </conflict>
</comment>
<comment type="sequence caution" evidence="2">
    <conflict type="erroneous initiation">
        <sequence resource="EMBL-CDS" id="ACD81738"/>
    </conflict>
</comment>
<comment type="sequence caution" evidence="2">
    <conflict type="erroneous initiation">
        <sequence resource="EMBL-CDS" id="ACD81752"/>
    </conflict>
</comment>
<comment type="sequence caution" evidence="2">
    <conflict type="erroneous initiation">
        <sequence resource="EMBL-CDS" id="ACD81760"/>
    </conflict>
</comment>